<geneLocation type="chloroplast"/>
<name>RK21_PORPU</name>
<reference key="1">
    <citation type="journal article" date="1995" name="Plant Mol. Biol. Rep.">
        <title>Complete nucleotide sequence of the Porphyra purpurea chloroplast genome.</title>
        <authorList>
            <person name="Reith M.E."/>
            <person name="Munholland J."/>
        </authorList>
    </citation>
    <scope>NUCLEOTIDE SEQUENCE [LARGE SCALE GENOMIC DNA]</scope>
    <source>
        <strain>Avonport</strain>
    </source>
</reference>
<keyword id="KW-0150">Chloroplast</keyword>
<keyword id="KW-0934">Plastid</keyword>
<keyword id="KW-0687">Ribonucleoprotein</keyword>
<keyword id="KW-0689">Ribosomal protein</keyword>
<keyword id="KW-0694">RNA-binding</keyword>
<keyword id="KW-0699">rRNA-binding</keyword>
<feature type="chain" id="PRO_0000181027" description="Large ribosomal subunit protein bL21c">
    <location>
        <begin position="1"/>
        <end position="104"/>
    </location>
</feature>
<sequence>MTYAIIEASGKQLWIEEGRYYDLNHIPVEPGQSIILGKVLLLNKDGHVSLGHPCIEGAVIKATVMRHLRGKKITVFKMKPKKKMRLKKGHRQELTRLMIDSIMT</sequence>
<accession>P51209</accession>
<proteinExistence type="inferred from homology"/>
<dbReference type="EMBL" id="U38804">
    <property type="protein sequence ID" value="AAC08095.1"/>
    <property type="molecule type" value="Genomic_DNA"/>
</dbReference>
<dbReference type="PIR" id="S73130">
    <property type="entry name" value="S73130"/>
</dbReference>
<dbReference type="RefSeq" id="NP_053819.1">
    <property type="nucleotide sequence ID" value="NC_000925.1"/>
</dbReference>
<dbReference type="SMR" id="P51209"/>
<dbReference type="GeneID" id="809833"/>
<dbReference type="GO" id="GO:0009507">
    <property type="term" value="C:chloroplast"/>
    <property type="evidence" value="ECO:0007669"/>
    <property type="project" value="UniProtKB-SubCell"/>
</dbReference>
<dbReference type="GO" id="GO:0005762">
    <property type="term" value="C:mitochondrial large ribosomal subunit"/>
    <property type="evidence" value="ECO:0007669"/>
    <property type="project" value="TreeGrafter"/>
</dbReference>
<dbReference type="GO" id="GO:0019843">
    <property type="term" value="F:rRNA binding"/>
    <property type="evidence" value="ECO:0007669"/>
    <property type="project" value="UniProtKB-UniRule"/>
</dbReference>
<dbReference type="GO" id="GO:0003735">
    <property type="term" value="F:structural constituent of ribosome"/>
    <property type="evidence" value="ECO:0007669"/>
    <property type="project" value="InterPro"/>
</dbReference>
<dbReference type="GO" id="GO:0006412">
    <property type="term" value="P:translation"/>
    <property type="evidence" value="ECO:0007669"/>
    <property type="project" value="UniProtKB-UniRule"/>
</dbReference>
<dbReference type="HAMAP" id="MF_01363">
    <property type="entry name" value="Ribosomal_bL21"/>
    <property type="match status" value="1"/>
</dbReference>
<dbReference type="InterPro" id="IPR028909">
    <property type="entry name" value="bL21-like"/>
</dbReference>
<dbReference type="InterPro" id="IPR036164">
    <property type="entry name" value="bL21-like_sf"/>
</dbReference>
<dbReference type="InterPro" id="IPR001787">
    <property type="entry name" value="Ribosomal_bL21"/>
</dbReference>
<dbReference type="InterPro" id="IPR018258">
    <property type="entry name" value="Ribosomal_bL21_CS"/>
</dbReference>
<dbReference type="NCBIfam" id="TIGR00061">
    <property type="entry name" value="L21"/>
    <property type="match status" value="1"/>
</dbReference>
<dbReference type="PANTHER" id="PTHR21349">
    <property type="entry name" value="50S RIBOSOMAL PROTEIN L21"/>
    <property type="match status" value="1"/>
</dbReference>
<dbReference type="PANTHER" id="PTHR21349:SF7">
    <property type="entry name" value="LARGE RIBOSOMAL SUBUNIT PROTEIN BL21C"/>
    <property type="match status" value="1"/>
</dbReference>
<dbReference type="Pfam" id="PF00829">
    <property type="entry name" value="Ribosomal_L21p"/>
    <property type="match status" value="1"/>
</dbReference>
<dbReference type="SUPFAM" id="SSF141091">
    <property type="entry name" value="L21p-like"/>
    <property type="match status" value="1"/>
</dbReference>
<dbReference type="PROSITE" id="PS01169">
    <property type="entry name" value="RIBOSOMAL_L21"/>
    <property type="match status" value="1"/>
</dbReference>
<protein>
    <recommendedName>
        <fullName evidence="1">Large ribosomal subunit protein bL21c</fullName>
    </recommendedName>
    <alternativeName>
        <fullName evidence="2">50S ribosomal protein L21, chloroplastic</fullName>
    </alternativeName>
</protein>
<comment type="function">
    <text evidence="1">This protein binds to 23S rRNA.</text>
</comment>
<comment type="subunit">
    <text evidence="1">Part of the 50S ribosomal subunit.</text>
</comment>
<comment type="subcellular location">
    <subcellularLocation>
        <location>Plastid</location>
        <location>Chloroplast</location>
    </subcellularLocation>
</comment>
<comment type="similarity">
    <text evidence="1">Belongs to the bacterial ribosomal protein bL21 family.</text>
</comment>
<evidence type="ECO:0000255" key="1">
    <source>
        <dbReference type="HAMAP-Rule" id="MF_01363"/>
    </source>
</evidence>
<evidence type="ECO:0000305" key="2"/>
<organism>
    <name type="scientific">Porphyra purpurea</name>
    <name type="common">Red seaweed</name>
    <name type="synonym">Ulva purpurea</name>
    <dbReference type="NCBI Taxonomy" id="2787"/>
    <lineage>
        <taxon>Eukaryota</taxon>
        <taxon>Rhodophyta</taxon>
        <taxon>Bangiophyceae</taxon>
        <taxon>Bangiales</taxon>
        <taxon>Bangiaceae</taxon>
        <taxon>Porphyra</taxon>
    </lineage>
</organism>
<gene>
    <name evidence="1" type="primary">rpl21</name>
</gene>